<evidence type="ECO:0000255" key="1">
    <source>
        <dbReference type="HAMAP-Rule" id="MF_00097"/>
    </source>
</evidence>
<protein>
    <recommendedName>
        <fullName evidence="1">Thiamine-phosphate synthase</fullName>
        <shortName evidence="1">TP synthase</shortName>
        <shortName evidence="1">TPS</shortName>
        <ecNumber evidence="1">2.5.1.3</ecNumber>
    </recommendedName>
    <alternativeName>
        <fullName evidence="1">Thiamine-phosphate pyrophosphorylase</fullName>
        <shortName evidence="1">TMP pyrophosphorylase</shortName>
        <shortName evidence="1">TMP-PPase</shortName>
    </alternativeName>
</protein>
<comment type="function">
    <text evidence="1">Condenses 4-methyl-5-(beta-hydroxyethyl)thiazole monophosphate (THZ-P) and 2-methyl-4-amino-5-hydroxymethyl pyrimidine pyrophosphate (HMP-PP) to form thiamine monophosphate (TMP).</text>
</comment>
<comment type="catalytic activity">
    <reaction evidence="1">
        <text>2-[(2R,5Z)-2-carboxy-4-methylthiazol-5(2H)-ylidene]ethyl phosphate + 4-amino-2-methyl-5-(diphosphooxymethyl)pyrimidine + 2 H(+) = thiamine phosphate + CO2 + diphosphate</text>
        <dbReference type="Rhea" id="RHEA:47844"/>
        <dbReference type="ChEBI" id="CHEBI:15378"/>
        <dbReference type="ChEBI" id="CHEBI:16526"/>
        <dbReference type="ChEBI" id="CHEBI:33019"/>
        <dbReference type="ChEBI" id="CHEBI:37575"/>
        <dbReference type="ChEBI" id="CHEBI:57841"/>
        <dbReference type="ChEBI" id="CHEBI:62899"/>
        <dbReference type="EC" id="2.5.1.3"/>
    </reaction>
</comment>
<comment type="catalytic activity">
    <reaction evidence="1">
        <text>2-(2-carboxy-4-methylthiazol-5-yl)ethyl phosphate + 4-amino-2-methyl-5-(diphosphooxymethyl)pyrimidine + 2 H(+) = thiamine phosphate + CO2 + diphosphate</text>
        <dbReference type="Rhea" id="RHEA:47848"/>
        <dbReference type="ChEBI" id="CHEBI:15378"/>
        <dbReference type="ChEBI" id="CHEBI:16526"/>
        <dbReference type="ChEBI" id="CHEBI:33019"/>
        <dbReference type="ChEBI" id="CHEBI:37575"/>
        <dbReference type="ChEBI" id="CHEBI:57841"/>
        <dbReference type="ChEBI" id="CHEBI:62890"/>
        <dbReference type="EC" id="2.5.1.3"/>
    </reaction>
</comment>
<comment type="catalytic activity">
    <reaction evidence="1">
        <text>4-methyl-5-(2-phosphooxyethyl)-thiazole + 4-amino-2-methyl-5-(diphosphooxymethyl)pyrimidine + H(+) = thiamine phosphate + diphosphate</text>
        <dbReference type="Rhea" id="RHEA:22328"/>
        <dbReference type="ChEBI" id="CHEBI:15378"/>
        <dbReference type="ChEBI" id="CHEBI:33019"/>
        <dbReference type="ChEBI" id="CHEBI:37575"/>
        <dbReference type="ChEBI" id="CHEBI:57841"/>
        <dbReference type="ChEBI" id="CHEBI:58296"/>
        <dbReference type="EC" id="2.5.1.3"/>
    </reaction>
</comment>
<comment type="cofactor">
    <cofactor evidence="1">
        <name>Mg(2+)</name>
        <dbReference type="ChEBI" id="CHEBI:18420"/>
    </cofactor>
    <text evidence="1">Binds 1 Mg(2+) ion per subunit.</text>
</comment>
<comment type="pathway">
    <text evidence="1">Cofactor biosynthesis; thiamine diphosphate biosynthesis; thiamine phosphate from 4-amino-2-methyl-5-diphosphomethylpyrimidine and 4-methyl-5-(2-phosphoethyl)-thiazole: step 1/1.</text>
</comment>
<comment type="similarity">
    <text evidence="1">Belongs to the thiamine-phosphate synthase family.</text>
</comment>
<dbReference type="EC" id="2.5.1.3" evidence="1"/>
<dbReference type="EMBL" id="CP000736">
    <property type="protein sequence ID" value="ABR52995.1"/>
    <property type="molecule type" value="Genomic_DNA"/>
</dbReference>
<dbReference type="SMR" id="A6U3H7"/>
<dbReference type="KEGG" id="sah:SaurJH1_2166"/>
<dbReference type="HOGENOM" id="CLU_018272_3_2_9"/>
<dbReference type="UniPathway" id="UPA00060">
    <property type="reaction ID" value="UER00141"/>
</dbReference>
<dbReference type="GO" id="GO:0005737">
    <property type="term" value="C:cytoplasm"/>
    <property type="evidence" value="ECO:0007669"/>
    <property type="project" value="TreeGrafter"/>
</dbReference>
<dbReference type="GO" id="GO:0000287">
    <property type="term" value="F:magnesium ion binding"/>
    <property type="evidence" value="ECO:0007669"/>
    <property type="project" value="UniProtKB-UniRule"/>
</dbReference>
<dbReference type="GO" id="GO:0004789">
    <property type="term" value="F:thiamine-phosphate diphosphorylase activity"/>
    <property type="evidence" value="ECO:0007669"/>
    <property type="project" value="UniProtKB-UniRule"/>
</dbReference>
<dbReference type="GO" id="GO:0009228">
    <property type="term" value="P:thiamine biosynthetic process"/>
    <property type="evidence" value="ECO:0007669"/>
    <property type="project" value="UniProtKB-KW"/>
</dbReference>
<dbReference type="GO" id="GO:0009229">
    <property type="term" value="P:thiamine diphosphate biosynthetic process"/>
    <property type="evidence" value="ECO:0007669"/>
    <property type="project" value="UniProtKB-UniRule"/>
</dbReference>
<dbReference type="CDD" id="cd00564">
    <property type="entry name" value="TMP_TenI"/>
    <property type="match status" value="1"/>
</dbReference>
<dbReference type="FunFam" id="3.20.20.70:FF:000096">
    <property type="entry name" value="Thiamine-phosphate synthase"/>
    <property type="match status" value="1"/>
</dbReference>
<dbReference type="Gene3D" id="3.20.20.70">
    <property type="entry name" value="Aldolase class I"/>
    <property type="match status" value="1"/>
</dbReference>
<dbReference type="HAMAP" id="MF_00097">
    <property type="entry name" value="TMP_synthase"/>
    <property type="match status" value="1"/>
</dbReference>
<dbReference type="InterPro" id="IPR013785">
    <property type="entry name" value="Aldolase_TIM"/>
</dbReference>
<dbReference type="InterPro" id="IPR036206">
    <property type="entry name" value="ThiamineP_synth_sf"/>
</dbReference>
<dbReference type="InterPro" id="IPR022998">
    <property type="entry name" value="ThiamineP_synth_TenI"/>
</dbReference>
<dbReference type="InterPro" id="IPR034291">
    <property type="entry name" value="TMP_synthase"/>
</dbReference>
<dbReference type="NCBIfam" id="TIGR00693">
    <property type="entry name" value="thiE"/>
    <property type="match status" value="1"/>
</dbReference>
<dbReference type="PANTHER" id="PTHR20857">
    <property type="entry name" value="THIAMINE-PHOSPHATE PYROPHOSPHORYLASE"/>
    <property type="match status" value="1"/>
</dbReference>
<dbReference type="PANTHER" id="PTHR20857:SF15">
    <property type="entry name" value="THIAMINE-PHOSPHATE SYNTHASE"/>
    <property type="match status" value="1"/>
</dbReference>
<dbReference type="Pfam" id="PF02581">
    <property type="entry name" value="TMP-TENI"/>
    <property type="match status" value="1"/>
</dbReference>
<dbReference type="SUPFAM" id="SSF51391">
    <property type="entry name" value="Thiamin phosphate synthase"/>
    <property type="match status" value="1"/>
</dbReference>
<proteinExistence type="inferred from homology"/>
<organism>
    <name type="scientific">Staphylococcus aureus (strain JH1)</name>
    <dbReference type="NCBI Taxonomy" id="359787"/>
    <lineage>
        <taxon>Bacteria</taxon>
        <taxon>Bacillati</taxon>
        <taxon>Bacillota</taxon>
        <taxon>Bacilli</taxon>
        <taxon>Bacillales</taxon>
        <taxon>Staphylococcaceae</taxon>
        <taxon>Staphylococcus</taxon>
    </lineage>
</organism>
<reference key="1">
    <citation type="submission" date="2007-06" db="EMBL/GenBank/DDBJ databases">
        <title>Complete sequence of chromosome of Staphylococcus aureus subsp. aureus JH1.</title>
        <authorList>
            <consortium name="US DOE Joint Genome Institute"/>
            <person name="Copeland A."/>
            <person name="Lucas S."/>
            <person name="Lapidus A."/>
            <person name="Barry K."/>
            <person name="Detter J.C."/>
            <person name="Glavina del Rio T."/>
            <person name="Hammon N."/>
            <person name="Israni S."/>
            <person name="Dalin E."/>
            <person name="Tice H."/>
            <person name="Pitluck S."/>
            <person name="Chain P."/>
            <person name="Malfatti S."/>
            <person name="Shin M."/>
            <person name="Vergez L."/>
            <person name="Schmutz J."/>
            <person name="Larimer F."/>
            <person name="Land M."/>
            <person name="Hauser L."/>
            <person name="Kyrpides N."/>
            <person name="Ivanova N."/>
            <person name="Tomasz A."/>
            <person name="Richardson P."/>
        </authorList>
    </citation>
    <scope>NUCLEOTIDE SEQUENCE [LARGE SCALE GENOMIC DNA]</scope>
    <source>
        <strain>JH1</strain>
    </source>
</reference>
<gene>
    <name evidence="1" type="primary">thiE</name>
    <name type="ordered locus">SaurJH1_2166</name>
</gene>
<sequence length="213" mass="23399">MFNQSYLNVYFICGTSDVPSHRTIHEVLEAALKAGITLFQFREKGESALKGNDKLVLAKELQHLCHQYDVPFIVNDDVSLAKEINADGIHVGQDDAKVKEIAQYFTDKIIGLSISDLDEYAKSDLTHVDYIGVGPIYPTPSKHDAHIPVGPEMIATFKEMNPQLPIVAIGGINTNNVAPIVEAGANGISVISAISKSENIEKTVNRFKDFFNN</sequence>
<accession>A6U3H7</accession>
<name>THIE_STAA2</name>
<keyword id="KW-0460">Magnesium</keyword>
<keyword id="KW-0479">Metal-binding</keyword>
<keyword id="KW-0784">Thiamine biosynthesis</keyword>
<keyword id="KW-0808">Transferase</keyword>
<feature type="chain" id="PRO_1000075577" description="Thiamine-phosphate synthase">
    <location>
        <begin position="1"/>
        <end position="213"/>
    </location>
</feature>
<feature type="binding site" evidence="1">
    <location>
        <begin position="40"/>
        <end position="44"/>
    </location>
    <ligand>
        <name>4-amino-2-methyl-5-(diphosphooxymethyl)pyrimidine</name>
        <dbReference type="ChEBI" id="CHEBI:57841"/>
    </ligand>
</feature>
<feature type="binding site" evidence="1">
    <location>
        <position position="75"/>
    </location>
    <ligand>
        <name>4-amino-2-methyl-5-(diphosphooxymethyl)pyrimidine</name>
        <dbReference type="ChEBI" id="CHEBI:57841"/>
    </ligand>
</feature>
<feature type="binding site" evidence="1">
    <location>
        <position position="76"/>
    </location>
    <ligand>
        <name>Mg(2+)</name>
        <dbReference type="ChEBI" id="CHEBI:18420"/>
    </ligand>
</feature>
<feature type="binding site" evidence="1">
    <location>
        <position position="95"/>
    </location>
    <ligand>
        <name>Mg(2+)</name>
        <dbReference type="ChEBI" id="CHEBI:18420"/>
    </ligand>
</feature>
<feature type="binding site" evidence="1">
    <location>
        <position position="113"/>
    </location>
    <ligand>
        <name>4-amino-2-methyl-5-(diphosphooxymethyl)pyrimidine</name>
        <dbReference type="ChEBI" id="CHEBI:57841"/>
    </ligand>
</feature>
<feature type="binding site" evidence="1">
    <location>
        <begin position="139"/>
        <end position="141"/>
    </location>
    <ligand>
        <name>2-[(2R,5Z)-2-carboxy-4-methylthiazol-5(2H)-ylidene]ethyl phosphate</name>
        <dbReference type="ChEBI" id="CHEBI:62899"/>
    </ligand>
</feature>
<feature type="binding site" evidence="1">
    <location>
        <position position="142"/>
    </location>
    <ligand>
        <name>4-amino-2-methyl-5-(diphosphooxymethyl)pyrimidine</name>
        <dbReference type="ChEBI" id="CHEBI:57841"/>
    </ligand>
</feature>
<feature type="binding site" evidence="1">
    <location>
        <position position="171"/>
    </location>
    <ligand>
        <name>2-[(2R,5Z)-2-carboxy-4-methylthiazol-5(2H)-ylidene]ethyl phosphate</name>
        <dbReference type="ChEBI" id="CHEBI:62899"/>
    </ligand>
</feature>
<feature type="binding site" evidence="1">
    <location>
        <begin position="191"/>
        <end position="192"/>
    </location>
    <ligand>
        <name>2-[(2R,5Z)-2-carboxy-4-methylthiazol-5(2H)-ylidene]ethyl phosphate</name>
        <dbReference type="ChEBI" id="CHEBI:62899"/>
    </ligand>
</feature>